<evidence type="ECO:0000255" key="1"/>
<evidence type="ECO:0000305" key="2"/>
<gene>
    <name type="ORF">LIS137</name>
</gene>
<reference key="1">
    <citation type="journal article" date="1990" name="Virology">
        <title>Genetic variation and multigene families in African swine fever virus.</title>
        <authorList>
            <person name="de la Vega I."/>
            <person name="Vinuela E."/>
            <person name="Blasco R."/>
        </authorList>
    </citation>
    <scope>NUCLEOTIDE SEQUENCE [GENOMIC DNA]</scope>
</reference>
<comment type="similarity">
    <text evidence="2">Belongs to the asfaviruses V110 family.</text>
</comment>
<protein>
    <recommendedName>
        <fullName>Protein MGF 110-7L</fullName>
    </recommendedName>
</protein>
<sequence length="137" mass="15981">MLVIILGVIGLLASSNLVSSSTSTRVGGHLPLTFDPPENELGYWCTYVESCRFCWDCEDGICTSRVWGNNSTSIIENDYVKYCEVSRWGDLCRYDVEEHIYHSMNCSDPKPWNPYKIARKEWKKDKHFRKELKKDEF</sequence>
<accession>P26709</accession>
<keyword id="KW-0244">Early protein</keyword>
<keyword id="KW-0325">Glycoprotein</keyword>
<keyword id="KW-0732">Signal</keyword>
<organismHost>
    <name type="scientific">Ornithodoros</name>
    <name type="common">relapsing fever ticks</name>
    <dbReference type="NCBI Taxonomy" id="6937"/>
</organismHost>
<organismHost>
    <name type="scientific">Sus scrofa</name>
    <name type="common">Pig</name>
    <dbReference type="NCBI Taxonomy" id="9823"/>
</organismHost>
<name>1107L_ASFL5</name>
<proteinExistence type="inferred from homology"/>
<dbReference type="EMBL" id="M58155">
    <property type="protein sequence ID" value="AAA42714.1"/>
    <property type="molecule type" value="Genomic_DNA"/>
</dbReference>
<dbReference type="PIR" id="H45348">
    <property type="entry name" value="H45348"/>
</dbReference>
<dbReference type="InterPro" id="IPR004848">
    <property type="entry name" value="ASFV_fam_110"/>
</dbReference>
<dbReference type="Pfam" id="PF01639">
    <property type="entry name" value="v110"/>
    <property type="match status" value="1"/>
</dbReference>
<feature type="signal peptide" evidence="1">
    <location>
        <begin position="1"/>
        <end position="20"/>
    </location>
</feature>
<feature type="chain" id="PRO_0000036732" description="Protein MGF 110-7L">
    <location>
        <begin position="21"/>
        <end position="137"/>
    </location>
</feature>
<feature type="glycosylation site" description="N-linked (GlcNAc...) asparagine; by host" evidence="1">
    <location>
        <position position="69"/>
    </location>
</feature>
<feature type="glycosylation site" description="N-linked (GlcNAc...) asparagine; by host" evidence="1">
    <location>
        <position position="70"/>
    </location>
</feature>
<feature type="glycosylation site" description="N-linked (GlcNAc...) asparagine; by host" evidence="1">
    <location>
        <position position="105"/>
    </location>
</feature>
<organism>
    <name type="scientific">African swine fever virus (isolate Portugal/Lis 57/1957)</name>
    <name type="common">ASFV</name>
    <dbReference type="NCBI Taxonomy" id="10499"/>
    <lineage>
        <taxon>Viruses</taxon>
        <taxon>Varidnaviria</taxon>
        <taxon>Bamfordvirae</taxon>
        <taxon>Nucleocytoviricota</taxon>
        <taxon>Pokkesviricetes</taxon>
        <taxon>Asfuvirales</taxon>
        <taxon>Asfarviridae</taxon>
        <taxon>Asfivirus</taxon>
        <taxon>African swine fever virus</taxon>
    </lineage>
</organism>